<reference key="1">
    <citation type="journal article" date="1994" name="Neuron">
        <title>Cloning of a structural and functional homolog of the circadian clock gene period from the giant silkmoth Antheraea pernyi.</title>
        <authorList>
            <person name="Reppert S.M."/>
            <person name="Tsai T."/>
            <person name="Roca A.L."/>
            <person name="Sauman I."/>
        </authorList>
    </citation>
    <scope>NUCLEOTIDE SEQUENCE [MRNA]</scope>
</reference>
<gene>
    <name type="primary">per</name>
</gene>
<accession>Q25478</accession>
<keyword id="KW-0090">Biological rhythms</keyword>
<keyword id="KW-0539">Nucleus</keyword>
<keyword id="KW-0597">Phosphoprotein</keyword>
<keyword id="KW-0677">Repeat</keyword>
<dbReference type="EMBL" id="U12773">
    <property type="protein sequence ID" value="AAA64678.1"/>
    <property type="molecule type" value="mRNA"/>
</dbReference>
<dbReference type="SMR" id="Q25478"/>
<dbReference type="OrthoDB" id="7788983at2759"/>
<dbReference type="GO" id="GO:0005737">
    <property type="term" value="C:cytoplasm"/>
    <property type="evidence" value="ECO:0007669"/>
    <property type="project" value="TreeGrafter"/>
</dbReference>
<dbReference type="GO" id="GO:0005634">
    <property type="term" value="C:nucleus"/>
    <property type="evidence" value="ECO:0007669"/>
    <property type="project" value="UniProtKB-SubCell"/>
</dbReference>
<dbReference type="GO" id="GO:0000976">
    <property type="term" value="F:transcription cis-regulatory region binding"/>
    <property type="evidence" value="ECO:0007669"/>
    <property type="project" value="TreeGrafter"/>
</dbReference>
<dbReference type="GO" id="GO:0001222">
    <property type="term" value="F:transcription corepressor binding"/>
    <property type="evidence" value="ECO:0007669"/>
    <property type="project" value="TreeGrafter"/>
</dbReference>
<dbReference type="GO" id="GO:0032922">
    <property type="term" value="P:circadian regulation of gene expression"/>
    <property type="evidence" value="ECO:0007669"/>
    <property type="project" value="TreeGrafter"/>
</dbReference>
<dbReference type="GO" id="GO:0043153">
    <property type="term" value="P:entrainment of circadian clock by photoperiod"/>
    <property type="evidence" value="ECO:0007669"/>
    <property type="project" value="TreeGrafter"/>
</dbReference>
<dbReference type="GO" id="GO:0000122">
    <property type="term" value="P:negative regulation of transcription by RNA polymerase II"/>
    <property type="evidence" value="ECO:0007669"/>
    <property type="project" value="TreeGrafter"/>
</dbReference>
<dbReference type="CDD" id="cd00130">
    <property type="entry name" value="PAS"/>
    <property type="match status" value="1"/>
</dbReference>
<dbReference type="Gene3D" id="3.30.450.20">
    <property type="entry name" value="PAS domain"/>
    <property type="match status" value="2"/>
</dbReference>
<dbReference type="Gene3D" id="1.20.5.770">
    <property type="entry name" value="Single helix bin"/>
    <property type="match status" value="1"/>
</dbReference>
<dbReference type="InterPro" id="IPR000014">
    <property type="entry name" value="PAS"/>
</dbReference>
<dbReference type="InterPro" id="IPR035965">
    <property type="entry name" value="PAS-like_dom_sf"/>
</dbReference>
<dbReference type="InterPro" id="IPR050760">
    <property type="entry name" value="Period_circadian_regulator"/>
</dbReference>
<dbReference type="PANTHER" id="PTHR11269">
    <property type="entry name" value="PERIOD CIRCADIAN PROTEIN"/>
    <property type="match status" value="1"/>
</dbReference>
<dbReference type="PANTHER" id="PTHR11269:SF16">
    <property type="entry name" value="PERIOD CIRCADIAN PROTEIN"/>
    <property type="match status" value="1"/>
</dbReference>
<dbReference type="Pfam" id="PF14598">
    <property type="entry name" value="PAS_11"/>
    <property type="match status" value="1"/>
</dbReference>
<dbReference type="SMART" id="SM00091">
    <property type="entry name" value="PAS"/>
    <property type="match status" value="1"/>
</dbReference>
<dbReference type="SUPFAM" id="SSF55785">
    <property type="entry name" value="PYP-like sensor domain (PAS domain)"/>
    <property type="match status" value="2"/>
</dbReference>
<dbReference type="PROSITE" id="PS50112">
    <property type="entry name" value="PAS"/>
    <property type="match status" value="2"/>
</dbReference>
<protein>
    <recommendedName>
        <fullName>Period circadian protein</fullName>
    </recommendedName>
</protein>
<organism>
    <name type="scientific">Manduca sexta</name>
    <name type="common">Tobacco hawkmoth</name>
    <name type="synonym">Tobacco hornworm</name>
    <dbReference type="NCBI Taxonomy" id="7130"/>
    <lineage>
        <taxon>Eukaryota</taxon>
        <taxon>Metazoa</taxon>
        <taxon>Ecdysozoa</taxon>
        <taxon>Arthropoda</taxon>
        <taxon>Hexapoda</taxon>
        <taxon>Insecta</taxon>
        <taxon>Pterygota</taxon>
        <taxon>Neoptera</taxon>
        <taxon>Endopterygota</taxon>
        <taxon>Lepidoptera</taxon>
        <taxon>Glossata</taxon>
        <taxon>Ditrysia</taxon>
        <taxon>Bombycoidea</taxon>
        <taxon>Sphingidae</taxon>
        <taxon>Sphinginae</taxon>
        <taxon>Sphingini</taxon>
        <taxon>Manduca</taxon>
    </lineage>
</organism>
<proteinExistence type="evidence at transcript level"/>
<feature type="chain" id="PRO_0000162621" description="Period circadian protein">
    <location>
        <begin position="1" status="less than"/>
        <end position="354" status="greater than"/>
    </location>
</feature>
<feature type="domain" description="PAS 1" evidence="2">
    <location>
        <begin position="1" status="less than"/>
        <end position="55"/>
    </location>
</feature>
<feature type="domain" description="PAS 2" evidence="2">
    <location>
        <begin position="133"/>
        <end position="235"/>
    </location>
</feature>
<feature type="region of interest" description="Disordered" evidence="3">
    <location>
        <begin position="318"/>
        <end position="354"/>
    </location>
</feature>
<feature type="compositionally biased region" description="Polar residues" evidence="3">
    <location>
        <begin position="345"/>
        <end position="354"/>
    </location>
</feature>
<feature type="non-terminal residue">
    <location>
        <position position="1"/>
    </location>
</feature>
<feature type="non-terminal residue">
    <location>
        <position position="354"/>
    </location>
</feature>
<comment type="function">
    <text evidence="1">Involved in the generation of biological rhythms. The biological cycle depends on the rhythmic formation and nuclear localization of the tim-per complex. Light induces the degradation of tim, which promotes elimination of per. Nuclear activity of the heterodimer coordinatively regulates per and tim transcription negative feedback loop. Behaves as a negative element in circadian transcriptional loop. Does not appear to bind DNA, suggesting indirect transcriptional inhibition (By similarity).</text>
</comment>
<comment type="subunit">
    <text evidence="1">Forms a heterodimer with timeless (TIM); the complex then translocates into the nucleus.</text>
</comment>
<comment type="subcellular location">
    <subcellularLocation>
        <location>Nucleus</location>
    </subcellularLocation>
    <text evidence="1">Nuclear at specific periods of the day. Interaction with TIM is required for nuclear localization (By similarity).</text>
</comment>
<comment type="PTM">
    <text evidence="1">Phosphorylated with a circadian rhythmicity.</text>
</comment>
<name>PER_MANSE</name>
<evidence type="ECO:0000250" key="1"/>
<evidence type="ECO:0000255" key="2">
    <source>
        <dbReference type="PROSITE-ProRule" id="PRU00140"/>
    </source>
</evidence>
<evidence type="ECO:0000256" key="3">
    <source>
        <dbReference type="SAM" id="MobiDB-lite"/>
    </source>
</evidence>
<sequence>GIVMYTTSSLTTTLGFPKDMWIGRSFIDFVHPRDRNTFASQITSGLAVPKIVNGQSPGNPASTMVCRIRRYRGLTTGFGVKDRVVTFMPFLLKFTFKNVSDEEGKVIYLVIQATQFFSAFRIPSEVVSKAVPFVMRHAANGNLEYIDPESVPYLGYLPQDVTDKDALQLYHPEDLDYLQQVYETIVKEGGVPRTKAYRMMAQNGDYLKLETEWSSFINPWSKRLDFVIGKHHIIEGPSNPDVFQSPDPEKAVAMSEEEKAKEQKYRRDIIRTMNEVLTKPAEVAKQQMTKRCQDLASFMESLMEEQQPKVDEDLRLDIQDPDHSYYQRDSVMLGGISPHHDYNDSKSSTGTPLS</sequence>